<accession>Q8IZF3</accession>
<accession>B3KTD0</accession>
<accession>Q2PNZ0</accession>
<accession>Q5T5B5</accession>
<accession>Q5T5B6</accession>
<accession>Q86SN9</accession>
<accession>Q8IXE6</accession>
<evidence type="ECO:0000250" key="1">
    <source>
        <dbReference type="UniProtKB" id="Q9D2L6"/>
    </source>
</evidence>
<evidence type="ECO:0000255" key="2"/>
<evidence type="ECO:0000255" key="3">
    <source>
        <dbReference type="PROSITE-ProRule" id="PRU00098"/>
    </source>
</evidence>
<evidence type="ECO:0000256" key="4">
    <source>
        <dbReference type="SAM" id="MobiDB-lite"/>
    </source>
</evidence>
<evidence type="ECO:0000269" key="5">
    <source>
    </source>
</evidence>
<evidence type="ECO:0000269" key="6">
    <source>
    </source>
</evidence>
<evidence type="ECO:0000269" key="7">
    <source ref="1"/>
</evidence>
<evidence type="ECO:0000269" key="8">
    <source ref="5"/>
</evidence>
<evidence type="ECO:0000305" key="9"/>
<sequence length="695" mass="77719">MKMKSQATMICCLVFFLSTECSHYRSKIHLKAGDKLQSPEGKPKTGRIQEKCEGPCISSSNCSQPCAKDFHGEIGFTCNQKKWQKSAETCTSLSVEKLFKDSTGASRLSVAAPSIPLHILDFRAPETIESVAQGIRKNCPFDYACITDMVKSSETTSGNIAFIVELLKNISTDLSDNVTREKMKSYSEVANHILDTAAISNWAFIPNKNASSDLLQSVNLFARQLHIHNNSENIVNELFIQTKGFHINHNTSEKSLNFSMSMNNTTEDILGMVQIPRQELRKLWPNASQAISIAFPTLGAILREAHLQNVSLPRQVNGLVLSVVLPERLQEIILTFEKINKTRNARAQCVGWHSKKRRWDEKACQMMLDIRNEVKCRCNYTSVVMSFSILMSSKSMTDKVLDYITCIGLSVSILSLVLCLIIEATVWSRVVVTEISYMRHVCIVNIAVSLLTANVWFIIGSHFNIKAQDYNMCVAVTFFSHFFYLSLFFWMLFKALLIIYGILVIFRRMMKSRMMVIGFAIGYGCPLIIAVTTVAITEPEKGYMRPEACWLNWDNTKALLAFAIPAFVIVAVNLIVVLVVAVNTQRPSIGSSKSQDVVIIMRISKNVAILTPLLGLTWGFGIATLIEGTSLTFHIIFALLNAFQGFFILLFGTIMDHKIRDALRMRMSSLKGKSRAAENASLGPTNGSKLMNRQG</sequence>
<reference key="1">
    <citation type="submission" date="2005-12" db="EMBL/GenBank/DDBJ databases">
        <title>Complete coding sequence of GPR115.</title>
        <authorList>
            <person name="Bonner T.I."/>
            <person name="Kauffman D."/>
            <person name="Nagle J.W."/>
            <person name="Sloger M."/>
        </authorList>
    </citation>
    <scope>NUCLEOTIDE SEQUENCE [MRNA]</scope>
    <scope>VARIANT ASN-541</scope>
    <source>
        <tissue>Testis</tissue>
    </source>
</reference>
<reference key="2">
    <citation type="submission" date="2001-07" db="EMBL/GenBank/DDBJ databases">
        <title>Genome-wide discovery and analysis of human seven transmembrane helix receptor genes.</title>
        <authorList>
            <person name="Suwa M."/>
            <person name="Sato T."/>
            <person name="Okouchi I."/>
            <person name="Arita M."/>
            <person name="Futami K."/>
            <person name="Matsumoto S."/>
            <person name="Tsutsumi S."/>
            <person name="Aburatani H."/>
            <person name="Asai K."/>
            <person name="Akiyama Y."/>
        </authorList>
    </citation>
    <scope>NUCLEOTIDE SEQUENCE [GENOMIC DNA]</scope>
</reference>
<reference key="3">
    <citation type="journal article" date="2004" name="Nat. Genet.">
        <title>Complete sequencing and characterization of 21,243 full-length human cDNAs.</title>
        <authorList>
            <person name="Ota T."/>
            <person name="Suzuki Y."/>
            <person name="Nishikawa T."/>
            <person name="Otsuki T."/>
            <person name="Sugiyama T."/>
            <person name="Irie R."/>
            <person name="Wakamatsu A."/>
            <person name="Hayashi K."/>
            <person name="Sato H."/>
            <person name="Nagai K."/>
            <person name="Kimura K."/>
            <person name="Makita H."/>
            <person name="Sekine M."/>
            <person name="Obayashi M."/>
            <person name="Nishi T."/>
            <person name="Shibahara T."/>
            <person name="Tanaka T."/>
            <person name="Ishii S."/>
            <person name="Yamamoto J."/>
            <person name="Saito K."/>
            <person name="Kawai Y."/>
            <person name="Isono Y."/>
            <person name="Nakamura Y."/>
            <person name="Nagahari K."/>
            <person name="Murakami K."/>
            <person name="Yasuda T."/>
            <person name="Iwayanagi T."/>
            <person name="Wagatsuma M."/>
            <person name="Shiratori A."/>
            <person name="Sudo H."/>
            <person name="Hosoiri T."/>
            <person name="Kaku Y."/>
            <person name="Kodaira H."/>
            <person name="Kondo H."/>
            <person name="Sugawara M."/>
            <person name="Takahashi M."/>
            <person name="Kanda K."/>
            <person name="Yokoi T."/>
            <person name="Furuya T."/>
            <person name="Kikkawa E."/>
            <person name="Omura Y."/>
            <person name="Abe K."/>
            <person name="Kamihara K."/>
            <person name="Katsuta N."/>
            <person name="Sato K."/>
            <person name="Tanikawa M."/>
            <person name="Yamazaki M."/>
            <person name="Ninomiya K."/>
            <person name="Ishibashi T."/>
            <person name="Yamashita H."/>
            <person name="Murakawa K."/>
            <person name="Fujimori K."/>
            <person name="Tanai H."/>
            <person name="Kimata M."/>
            <person name="Watanabe M."/>
            <person name="Hiraoka S."/>
            <person name="Chiba Y."/>
            <person name="Ishida S."/>
            <person name="Ono Y."/>
            <person name="Takiguchi S."/>
            <person name="Watanabe S."/>
            <person name="Yosida M."/>
            <person name="Hotuta T."/>
            <person name="Kusano J."/>
            <person name="Kanehori K."/>
            <person name="Takahashi-Fujii A."/>
            <person name="Hara H."/>
            <person name="Tanase T.-O."/>
            <person name="Nomura Y."/>
            <person name="Togiya S."/>
            <person name="Komai F."/>
            <person name="Hara R."/>
            <person name="Takeuchi K."/>
            <person name="Arita M."/>
            <person name="Imose N."/>
            <person name="Musashino K."/>
            <person name="Yuuki H."/>
            <person name="Oshima A."/>
            <person name="Sasaki N."/>
            <person name="Aotsuka S."/>
            <person name="Yoshikawa Y."/>
            <person name="Matsunawa H."/>
            <person name="Ichihara T."/>
            <person name="Shiohata N."/>
            <person name="Sano S."/>
            <person name="Moriya S."/>
            <person name="Momiyama H."/>
            <person name="Satoh N."/>
            <person name="Takami S."/>
            <person name="Terashima Y."/>
            <person name="Suzuki O."/>
            <person name="Nakagawa S."/>
            <person name="Senoh A."/>
            <person name="Mizoguchi H."/>
            <person name="Goto Y."/>
            <person name="Shimizu F."/>
            <person name="Wakebe H."/>
            <person name="Hishigaki H."/>
            <person name="Watanabe T."/>
            <person name="Sugiyama A."/>
            <person name="Takemoto M."/>
            <person name="Kawakami B."/>
            <person name="Yamazaki M."/>
            <person name="Watanabe K."/>
            <person name="Kumagai A."/>
            <person name="Itakura S."/>
            <person name="Fukuzumi Y."/>
            <person name="Fujimori Y."/>
            <person name="Komiyama M."/>
            <person name="Tashiro H."/>
            <person name="Tanigami A."/>
            <person name="Fujiwara T."/>
            <person name="Ono T."/>
            <person name="Yamada K."/>
            <person name="Fujii Y."/>
            <person name="Ozaki K."/>
            <person name="Hirao M."/>
            <person name="Ohmori Y."/>
            <person name="Kawabata A."/>
            <person name="Hikiji T."/>
            <person name="Kobatake N."/>
            <person name="Inagaki H."/>
            <person name="Ikema Y."/>
            <person name="Okamoto S."/>
            <person name="Okitani R."/>
            <person name="Kawakami T."/>
            <person name="Noguchi S."/>
            <person name="Itoh T."/>
            <person name="Shigeta K."/>
            <person name="Senba T."/>
            <person name="Matsumura K."/>
            <person name="Nakajima Y."/>
            <person name="Mizuno T."/>
            <person name="Morinaga M."/>
            <person name="Sasaki M."/>
            <person name="Togashi T."/>
            <person name="Oyama M."/>
            <person name="Hata H."/>
            <person name="Watanabe M."/>
            <person name="Komatsu T."/>
            <person name="Mizushima-Sugano J."/>
            <person name="Satoh T."/>
            <person name="Shirai Y."/>
            <person name="Takahashi Y."/>
            <person name="Nakagawa K."/>
            <person name="Okumura K."/>
            <person name="Nagase T."/>
            <person name="Nomura N."/>
            <person name="Kikuchi H."/>
            <person name="Masuho Y."/>
            <person name="Yamashita R."/>
            <person name="Nakai K."/>
            <person name="Yada T."/>
            <person name="Nakamura Y."/>
            <person name="Ohara O."/>
            <person name="Isogai T."/>
            <person name="Sugano S."/>
        </authorList>
    </citation>
    <scope>NUCLEOTIDE SEQUENCE [LARGE SCALE MRNA]</scope>
    <scope>VARIANT ASN-541</scope>
    <source>
        <tissue>Tongue</tissue>
    </source>
</reference>
<reference key="4">
    <citation type="journal article" date="2003" name="Nature">
        <title>The DNA sequence and analysis of human chromosome 6.</title>
        <authorList>
            <person name="Mungall A.J."/>
            <person name="Palmer S.A."/>
            <person name="Sims S.K."/>
            <person name="Edwards C.A."/>
            <person name="Ashurst J.L."/>
            <person name="Wilming L."/>
            <person name="Jones M.C."/>
            <person name="Horton R."/>
            <person name="Hunt S.E."/>
            <person name="Scott C.E."/>
            <person name="Gilbert J.G.R."/>
            <person name="Clamp M.E."/>
            <person name="Bethel G."/>
            <person name="Milne S."/>
            <person name="Ainscough R."/>
            <person name="Almeida J.P."/>
            <person name="Ambrose K.D."/>
            <person name="Andrews T.D."/>
            <person name="Ashwell R.I.S."/>
            <person name="Babbage A.K."/>
            <person name="Bagguley C.L."/>
            <person name="Bailey J."/>
            <person name="Banerjee R."/>
            <person name="Barker D.J."/>
            <person name="Barlow K.F."/>
            <person name="Bates K."/>
            <person name="Beare D.M."/>
            <person name="Beasley H."/>
            <person name="Beasley O."/>
            <person name="Bird C.P."/>
            <person name="Blakey S.E."/>
            <person name="Bray-Allen S."/>
            <person name="Brook J."/>
            <person name="Brown A.J."/>
            <person name="Brown J.Y."/>
            <person name="Burford D.C."/>
            <person name="Burrill W."/>
            <person name="Burton J."/>
            <person name="Carder C."/>
            <person name="Carter N.P."/>
            <person name="Chapman J.C."/>
            <person name="Clark S.Y."/>
            <person name="Clark G."/>
            <person name="Clee C.M."/>
            <person name="Clegg S."/>
            <person name="Cobley V."/>
            <person name="Collier R.E."/>
            <person name="Collins J.E."/>
            <person name="Colman L.K."/>
            <person name="Corby N.R."/>
            <person name="Coville G.J."/>
            <person name="Culley K.M."/>
            <person name="Dhami P."/>
            <person name="Davies J."/>
            <person name="Dunn M."/>
            <person name="Earthrowl M.E."/>
            <person name="Ellington A.E."/>
            <person name="Evans K.A."/>
            <person name="Faulkner L."/>
            <person name="Francis M.D."/>
            <person name="Frankish A."/>
            <person name="Frankland J."/>
            <person name="French L."/>
            <person name="Garner P."/>
            <person name="Garnett J."/>
            <person name="Ghori M.J."/>
            <person name="Gilby L.M."/>
            <person name="Gillson C.J."/>
            <person name="Glithero R.J."/>
            <person name="Grafham D.V."/>
            <person name="Grant M."/>
            <person name="Gribble S."/>
            <person name="Griffiths C."/>
            <person name="Griffiths M.N.D."/>
            <person name="Hall R."/>
            <person name="Halls K.S."/>
            <person name="Hammond S."/>
            <person name="Harley J.L."/>
            <person name="Hart E.A."/>
            <person name="Heath P.D."/>
            <person name="Heathcott R."/>
            <person name="Holmes S.J."/>
            <person name="Howden P.J."/>
            <person name="Howe K.L."/>
            <person name="Howell G.R."/>
            <person name="Huckle E."/>
            <person name="Humphray S.J."/>
            <person name="Humphries M.D."/>
            <person name="Hunt A.R."/>
            <person name="Johnson C.M."/>
            <person name="Joy A.A."/>
            <person name="Kay M."/>
            <person name="Keenan S.J."/>
            <person name="Kimberley A.M."/>
            <person name="King A."/>
            <person name="Laird G.K."/>
            <person name="Langford C."/>
            <person name="Lawlor S."/>
            <person name="Leongamornlert D.A."/>
            <person name="Leversha M."/>
            <person name="Lloyd C.R."/>
            <person name="Lloyd D.M."/>
            <person name="Loveland J.E."/>
            <person name="Lovell J."/>
            <person name="Martin S."/>
            <person name="Mashreghi-Mohammadi M."/>
            <person name="Maslen G.L."/>
            <person name="Matthews L."/>
            <person name="McCann O.T."/>
            <person name="McLaren S.J."/>
            <person name="McLay K."/>
            <person name="McMurray A."/>
            <person name="Moore M.J.F."/>
            <person name="Mullikin J.C."/>
            <person name="Niblett D."/>
            <person name="Nickerson T."/>
            <person name="Novik K.L."/>
            <person name="Oliver K."/>
            <person name="Overton-Larty E.K."/>
            <person name="Parker A."/>
            <person name="Patel R."/>
            <person name="Pearce A.V."/>
            <person name="Peck A.I."/>
            <person name="Phillimore B.J.C.T."/>
            <person name="Phillips S."/>
            <person name="Plumb R.W."/>
            <person name="Porter K.M."/>
            <person name="Ramsey Y."/>
            <person name="Ranby S.A."/>
            <person name="Rice C.M."/>
            <person name="Ross M.T."/>
            <person name="Searle S.M."/>
            <person name="Sehra H.K."/>
            <person name="Sheridan E."/>
            <person name="Skuce C.D."/>
            <person name="Smith S."/>
            <person name="Smith M."/>
            <person name="Spraggon L."/>
            <person name="Squares S.L."/>
            <person name="Steward C.A."/>
            <person name="Sycamore N."/>
            <person name="Tamlyn-Hall G."/>
            <person name="Tester J."/>
            <person name="Theaker A.J."/>
            <person name="Thomas D.W."/>
            <person name="Thorpe A."/>
            <person name="Tracey A."/>
            <person name="Tromans A."/>
            <person name="Tubby B."/>
            <person name="Wall M."/>
            <person name="Wallis J.M."/>
            <person name="West A.P."/>
            <person name="White S.S."/>
            <person name="Whitehead S.L."/>
            <person name="Whittaker H."/>
            <person name="Wild A."/>
            <person name="Willey D.J."/>
            <person name="Wilmer T.E."/>
            <person name="Wood J.M."/>
            <person name="Wray P.W."/>
            <person name="Wyatt J.C."/>
            <person name="Young L."/>
            <person name="Younger R.M."/>
            <person name="Bentley D.R."/>
            <person name="Coulson A."/>
            <person name="Durbin R.M."/>
            <person name="Hubbard T."/>
            <person name="Sulston J.E."/>
            <person name="Dunham I."/>
            <person name="Rogers J."/>
            <person name="Beck S."/>
        </authorList>
    </citation>
    <scope>NUCLEOTIDE SEQUENCE [LARGE SCALE GENOMIC DNA]</scope>
</reference>
<reference key="5">
    <citation type="submission" date="2005-07" db="EMBL/GenBank/DDBJ databases">
        <authorList>
            <person name="Mural R.J."/>
            <person name="Istrail S."/>
            <person name="Sutton G.G."/>
            <person name="Florea L."/>
            <person name="Halpern A.L."/>
            <person name="Mobarry C.M."/>
            <person name="Lippert R."/>
            <person name="Walenz B."/>
            <person name="Shatkay H."/>
            <person name="Dew I."/>
            <person name="Miller J.R."/>
            <person name="Flanigan M.J."/>
            <person name="Edwards N.J."/>
            <person name="Bolanos R."/>
            <person name="Fasulo D."/>
            <person name="Halldorsson B.V."/>
            <person name="Hannenhalli S."/>
            <person name="Turner R."/>
            <person name="Yooseph S."/>
            <person name="Lu F."/>
            <person name="Nusskern D.R."/>
            <person name="Shue B.C."/>
            <person name="Zheng X.H."/>
            <person name="Zhong F."/>
            <person name="Delcher A.L."/>
            <person name="Huson D.H."/>
            <person name="Kravitz S.A."/>
            <person name="Mouchard L."/>
            <person name="Reinert K."/>
            <person name="Remington K.A."/>
            <person name="Clark A.G."/>
            <person name="Waterman M.S."/>
            <person name="Eichler E.E."/>
            <person name="Adams M.D."/>
            <person name="Hunkapiller M.W."/>
            <person name="Myers E.W."/>
            <person name="Venter J.C."/>
        </authorList>
    </citation>
    <scope>NUCLEOTIDE SEQUENCE [LARGE SCALE GENOMIC DNA]</scope>
    <scope>VARIANT ASN-541</scope>
</reference>
<reference key="6">
    <citation type="journal article" date="2003" name="Proc. Natl. Acad. Sci. U.S.A.">
        <title>The G protein-coupled receptor repertoires of human and mouse.</title>
        <authorList>
            <person name="Vassilatis D.K."/>
            <person name="Hohmann J.G."/>
            <person name="Zeng H."/>
            <person name="Li F."/>
            <person name="Ranchalis J.E."/>
            <person name="Mortrud M.T."/>
            <person name="Brown A."/>
            <person name="Rodriguez S.S."/>
            <person name="Weller J.R."/>
            <person name="Wright A.C."/>
            <person name="Bergmann J.E."/>
            <person name="Gaitanaris G.A."/>
        </authorList>
    </citation>
    <scope>NUCLEOTIDE SEQUENCE [LARGE SCALE MRNA] OF 125-589</scope>
</reference>
<reference key="7">
    <citation type="journal article" date="2002" name="FEBS Lett.">
        <title>Novel human G protein-coupled receptors with long N-terminals containing GPS domains and Ser/Thr-rich regions.</title>
        <authorList>
            <person name="Fredriksson R."/>
            <person name="Lagerstroem M.C."/>
            <person name="Hoeglund P.J."/>
            <person name="Schioeth H.B."/>
        </authorList>
    </citation>
    <scope>IDENTIFICATION</scope>
</reference>
<reference key="8">
    <citation type="journal article" date="2015" name="Pharmacol. Rev.">
        <title>International union of basic and clinical pharmacology. XCIV. Adhesion G protein-coupled receptors.</title>
        <authorList>
            <person name="Hamann J."/>
            <person name="Aust G."/>
            <person name="Arac D."/>
            <person name="Engel F.B."/>
            <person name="Formstone C."/>
            <person name="Fredriksson R."/>
            <person name="Hall R.A."/>
            <person name="Harty B.L."/>
            <person name="Kirchhoff C."/>
            <person name="Knapp B."/>
            <person name="Krishnan A."/>
            <person name="Liebscher I."/>
            <person name="Lin H.H."/>
            <person name="Martinelli D.C."/>
            <person name="Monk K.R."/>
            <person name="Peeters M.C."/>
            <person name="Piao X."/>
            <person name="Promel S."/>
            <person name="Schoneberg T."/>
            <person name="Schwartz T.W."/>
            <person name="Singer K."/>
            <person name="Stacey M."/>
            <person name="Ushkaryov Y.A."/>
            <person name="Vallon M."/>
            <person name="Wolfrum U."/>
            <person name="Wright M.W."/>
            <person name="Xu L."/>
            <person name="Langenhan T."/>
            <person name="Schioth H.B."/>
        </authorList>
    </citation>
    <scope>NOMENCLATURE</scope>
</reference>
<reference key="9">
    <citation type="journal article" date="2006" name="Science">
        <title>The consensus coding sequences of human breast and colorectal cancers.</title>
        <authorList>
            <person name="Sjoeblom T."/>
            <person name="Jones S."/>
            <person name="Wood L.D."/>
            <person name="Parsons D.W."/>
            <person name="Lin J."/>
            <person name="Barber T.D."/>
            <person name="Mandelker D."/>
            <person name="Leary R.J."/>
            <person name="Ptak J."/>
            <person name="Silliman N."/>
            <person name="Szabo S."/>
            <person name="Buckhaults P."/>
            <person name="Farrell C."/>
            <person name="Meeh P."/>
            <person name="Markowitz S.D."/>
            <person name="Willis J."/>
            <person name="Dawson D."/>
            <person name="Willson J.K.V."/>
            <person name="Gazdar A.F."/>
            <person name="Hartigan J."/>
            <person name="Wu L."/>
            <person name="Liu C."/>
            <person name="Parmigiani G."/>
            <person name="Park B.H."/>
            <person name="Bachman K.E."/>
            <person name="Papadopoulos N."/>
            <person name="Vogelstein B."/>
            <person name="Kinzler K.W."/>
            <person name="Velculescu V.E."/>
        </authorList>
    </citation>
    <scope>VARIANT [LARGE SCALE ANALYSIS] LEU-674</scope>
</reference>
<comment type="function">
    <text>Orphan receptor.</text>
</comment>
<comment type="interaction">
    <interactant intactId="EBI-12137513">
        <id>Q8IZF3</id>
    </interactant>
    <interactant intactId="EBI-16439278">
        <id>Q6FHY5</id>
        <label>MEOX2</label>
    </interactant>
    <organismsDiffer>false</organismsDiffer>
    <experiments>3</experiments>
</comment>
<comment type="subcellular location">
    <subcellularLocation>
        <location evidence="2">Membrane</location>
        <topology evidence="2">Multi-pass membrane protein</topology>
    </subcellularLocation>
</comment>
<comment type="miscellaneous">
    <text evidence="1">Most adhesion GPCRs undergo autoproteolysis at the GPS region of the GAIN-B domain. ADGRF2 is not autoproteolyzed at the GPS region because of the lack of a consensus catalytic triad sequence within the GAIN-B domain.</text>
</comment>
<comment type="similarity">
    <text evidence="9">Belongs to the G-protein coupled receptor 2 family. Adhesion G-protein coupled receptor (ADGR) subfamily.</text>
</comment>
<comment type="sequence caution" evidence="9">
    <conflict type="erroneous gene model prediction">
        <sequence resource="EMBL-CDS" id="AAN46671"/>
    </conflict>
</comment>
<comment type="sequence caution" evidence="9">
    <conflict type="erroneous gene model prediction">
        <sequence resource="EMBL-CDS" id="BAC45257"/>
    </conflict>
</comment>
<protein>
    <recommendedName>
        <fullName>Adhesion G protein-coupled receptor F4</fullName>
    </recommendedName>
    <alternativeName>
        <fullName>G-protein coupled receptor 115</fullName>
    </alternativeName>
    <alternativeName>
        <fullName>G-protein coupled receptor PGR18</fullName>
    </alternativeName>
</protein>
<name>AGRF4_HUMAN</name>
<proteinExistence type="evidence at protein level"/>
<organism>
    <name type="scientific">Homo sapiens</name>
    <name type="common">Human</name>
    <dbReference type="NCBI Taxonomy" id="9606"/>
    <lineage>
        <taxon>Eukaryota</taxon>
        <taxon>Metazoa</taxon>
        <taxon>Chordata</taxon>
        <taxon>Craniata</taxon>
        <taxon>Vertebrata</taxon>
        <taxon>Euteleostomi</taxon>
        <taxon>Mammalia</taxon>
        <taxon>Eutheria</taxon>
        <taxon>Euarchontoglires</taxon>
        <taxon>Primates</taxon>
        <taxon>Haplorrhini</taxon>
        <taxon>Catarrhini</taxon>
        <taxon>Hominidae</taxon>
        <taxon>Homo</taxon>
    </lineage>
</organism>
<gene>
    <name type="primary">ADGRF4</name>
    <name type="synonym">GPR115</name>
    <name type="synonym">PGR18</name>
</gene>
<feature type="signal peptide" evidence="2">
    <location>
        <begin position="1"/>
        <end position="21"/>
    </location>
</feature>
<feature type="chain" id="PRO_0000070336" description="Adhesion G protein-coupled receptor F4">
    <location>
        <begin position="22"/>
        <end position="695"/>
    </location>
</feature>
<feature type="topological domain" description="Extracellular" evidence="9">
    <location>
        <begin position="22"/>
        <end position="406"/>
    </location>
</feature>
<feature type="transmembrane region" description="Helical; Name=1" evidence="2">
    <location>
        <begin position="407"/>
        <end position="427"/>
    </location>
</feature>
<feature type="topological domain" description="Cytoplasmic" evidence="9">
    <location>
        <begin position="428"/>
        <end position="440"/>
    </location>
</feature>
<feature type="transmembrane region" description="Helical; Name=2" evidence="2">
    <location>
        <begin position="441"/>
        <end position="461"/>
    </location>
</feature>
<feature type="topological domain" description="Extracellular" evidence="9">
    <location>
        <begin position="462"/>
        <end position="485"/>
    </location>
</feature>
<feature type="transmembrane region" description="Helical; Name=3" evidence="2">
    <location>
        <begin position="486"/>
        <end position="506"/>
    </location>
</feature>
<feature type="topological domain" description="Cytoplasmic" evidence="9">
    <location>
        <begin position="507"/>
        <end position="515"/>
    </location>
</feature>
<feature type="transmembrane region" description="Helical; Name=4" evidence="2">
    <location>
        <begin position="516"/>
        <end position="536"/>
    </location>
</feature>
<feature type="topological domain" description="Extracellular" evidence="9">
    <location>
        <begin position="537"/>
        <end position="561"/>
    </location>
</feature>
<feature type="transmembrane region" description="Helical; Name=5" evidence="2">
    <location>
        <begin position="562"/>
        <end position="582"/>
    </location>
</feature>
<feature type="topological domain" description="Cytoplasmic" evidence="9">
    <location>
        <begin position="583"/>
        <end position="606"/>
    </location>
</feature>
<feature type="transmembrane region" description="Helical; Name=6" evidence="2">
    <location>
        <begin position="607"/>
        <end position="627"/>
    </location>
</feature>
<feature type="topological domain" description="Extracellular" evidence="9">
    <location>
        <begin position="628"/>
        <end position="634"/>
    </location>
</feature>
<feature type="transmembrane region" description="Helical; Name=7" evidence="2">
    <location>
        <begin position="635"/>
        <end position="655"/>
    </location>
</feature>
<feature type="topological domain" description="Cytoplasmic" evidence="9">
    <location>
        <begin position="656"/>
        <end position="695"/>
    </location>
</feature>
<feature type="domain" description="GAIN-B" evidence="3">
    <location>
        <begin position="249"/>
        <end position="397"/>
    </location>
</feature>
<feature type="region of interest" description="GPS" evidence="3">
    <location>
        <begin position="349"/>
        <end position="397"/>
    </location>
</feature>
<feature type="region of interest" description="Disordered" evidence="4">
    <location>
        <begin position="674"/>
        <end position="695"/>
    </location>
</feature>
<feature type="compositionally biased region" description="Polar residues" evidence="4">
    <location>
        <begin position="682"/>
        <end position="695"/>
    </location>
</feature>
<feature type="glycosylation site" description="N-linked (GlcNAc...) asparagine" evidence="2">
    <location>
        <position position="61"/>
    </location>
</feature>
<feature type="glycosylation site" description="N-linked (GlcNAc...) asparagine" evidence="2">
    <location>
        <position position="169"/>
    </location>
</feature>
<feature type="glycosylation site" description="N-linked (GlcNAc...) asparagine" evidence="2">
    <location>
        <position position="177"/>
    </location>
</feature>
<feature type="glycosylation site" description="N-linked (GlcNAc...) asparagine" evidence="2">
    <location>
        <position position="209"/>
    </location>
</feature>
<feature type="glycosylation site" description="N-linked (GlcNAc...) asparagine" evidence="2">
    <location>
        <position position="229"/>
    </location>
</feature>
<feature type="glycosylation site" description="N-linked (GlcNAc...) asparagine" evidence="2">
    <location>
        <position position="250"/>
    </location>
</feature>
<feature type="glycosylation site" description="N-linked (GlcNAc...) asparagine" evidence="2">
    <location>
        <position position="257"/>
    </location>
</feature>
<feature type="glycosylation site" description="N-linked (GlcNAc...) asparagine" evidence="2">
    <location>
        <position position="263"/>
    </location>
</feature>
<feature type="glycosylation site" description="N-linked (GlcNAc...) asparagine" evidence="2">
    <location>
        <position position="264"/>
    </location>
</feature>
<feature type="glycosylation site" description="N-linked (GlcNAc...) asparagine" evidence="2">
    <location>
        <position position="286"/>
    </location>
</feature>
<feature type="glycosylation site" description="N-linked (GlcNAc...) asparagine" evidence="2">
    <location>
        <position position="309"/>
    </location>
</feature>
<feature type="glycosylation site" description="N-linked (GlcNAc...) asparagine" evidence="2">
    <location>
        <position position="340"/>
    </location>
</feature>
<feature type="glycosylation site" description="N-linked (GlcNAc...) asparagine" evidence="2">
    <location>
        <position position="379"/>
    </location>
</feature>
<feature type="disulfide bond" evidence="3">
    <location>
        <begin position="349"/>
        <end position="376"/>
    </location>
</feature>
<feature type="disulfide bond" evidence="3">
    <location>
        <begin position="364"/>
        <end position="378"/>
    </location>
</feature>
<feature type="sequence variant" id="VAR_055930" description="In dbSNP:rs12110938.">
    <original>R</original>
    <variation>C</variation>
    <location>
        <position position="507"/>
    </location>
</feature>
<feature type="sequence variant" id="VAR_024476" description="In dbSNP:rs9369738." evidence="5 7 8">
    <original>K</original>
    <variation>N</variation>
    <location>
        <position position="541"/>
    </location>
</feature>
<feature type="sequence variant" id="VAR_036224" description="In a breast cancer sample; somatic mutation; dbSNP:rs572583506." evidence="6">
    <original>S</original>
    <variation>L</variation>
    <location>
        <position position="674"/>
    </location>
</feature>
<feature type="sequence conflict" description="In Ref. 6; AAO85068." evidence="9" ref="6">
    <original>M</original>
    <variation>I</variation>
    <location>
        <position position="491"/>
    </location>
</feature>
<feature type="sequence conflict" description="In Ref. 6; AAO85068." evidence="9" ref="6">
    <original>EPE</original>
    <variation>GPV</variation>
    <location>
        <begin position="538"/>
        <end position="540"/>
    </location>
</feature>
<dbReference type="EMBL" id="DQ315370">
    <property type="protein sequence ID" value="ABC41929.1"/>
    <property type="molecule type" value="mRNA"/>
</dbReference>
<dbReference type="EMBL" id="AB065474">
    <property type="protein sequence ID" value="BAC45257.1"/>
    <property type="status" value="ALT_SEQ"/>
    <property type="molecule type" value="Genomic_DNA"/>
</dbReference>
<dbReference type="EMBL" id="AK095395">
    <property type="protein sequence ID" value="BAG53042.1"/>
    <property type="molecule type" value="mRNA"/>
</dbReference>
<dbReference type="EMBL" id="AL356421">
    <property type="status" value="NOT_ANNOTATED_CDS"/>
    <property type="molecule type" value="Genomic_DNA"/>
</dbReference>
<dbReference type="EMBL" id="CH471081">
    <property type="protein sequence ID" value="EAX04321.1"/>
    <property type="molecule type" value="Genomic_DNA"/>
</dbReference>
<dbReference type="EMBL" id="AY255556">
    <property type="protein sequence ID" value="AAO85068.1"/>
    <property type="molecule type" value="mRNA"/>
</dbReference>
<dbReference type="EMBL" id="AY140957">
    <property type="protein sequence ID" value="AAN46671.1"/>
    <property type="status" value="ALT_SEQ"/>
    <property type="molecule type" value="mRNA"/>
</dbReference>
<dbReference type="CCDS" id="CCDS4922.2"/>
<dbReference type="RefSeq" id="NP_001334784.1">
    <property type="nucleotide sequence ID" value="NM_001347855.2"/>
</dbReference>
<dbReference type="RefSeq" id="NP_722580.3">
    <property type="nucleotide sequence ID" value="NM_153838.5"/>
</dbReference>
<dbReference type="SMR" id="Q8IZF3"/>
<dbReference type="BioGRID" id="128718">
    <property type="interactions" value="2"/>
</dbReference>
<dbReference type="IntAct" id="Q8IZF3">
    <property type="interactions" value="1"/>
</dbReference>
<dbReference type="STRING" id="9606.ENSP00000283303"/>
<dbReference type="ChEMBL" id="CHEMBL4523889"/>
<dbReference type="MEROPS" id="P02.042"/>
<dbReference type="GlyCosmos" id="Q8IZF3">
    <property type="glycosylation" value="13 sites, No reported glycans"/>
</dbReference>
<dbReference type="GlyGen" id="Q8IZF3">
    <property type="glycosylation" value="14 sites, 1 N-linked glycan (1 site), 1 O-linked glycan (1 site)"/>
</dbReference>
<dbReference type="iPTMnet" id="Q8IZF3"/>
<dbReference type="PhosphoSitePlus" id="Q8IZF3"/>
<dbReference type="BioMuta" id="ADGRF4"/>
<dbReference type="DMDM" id="296439339"/>
<dbReference type="jPOST" id="Q8IZF3"/>
<dbReference type="MassIVE" id="Q8IZF3"/>
<dbReference type="PaxDb" id="9606-ENSP00000283303"/>
<dbReference type="PeptideAtlas" id="Q8IZF3"/>
<dbReference type="ProteomicsDB" id="71341"/>
<dbReference type="Antibodypedia" id="1934">
    <property type="antibodies" value="224 antibodies from 29 providers"/>
</dbReference>
<dbReference type="DNASU" id="221393"/>
<dbReference type="Ensembl" id="ENST00000283303.3">
    <property type="protein sequence ID" value="ENSP00000283303.2"/>
    <property type="gene ID" value="ENSG00000153294.12"/>
</dbReference>
<dbReference type="Ensembl" id="ENST00000327753.7">
    <property type="protein sequence ID" value="ENSP00000328319.3"/>
    <property type="gene ID" value="ENSG00000153294.12"/>
</dbReference>
<dbReference type="GeneID" id="221393"/>
<dbReference type="KEGG" id="hsa:221393"/>
<dbReference type="MANE-Select" id="ENST00000283303.3">
    <property type="protein sequence ID" value="ENSP00000283303.2"/>
    <property type="RefSeq nucleotide sequence ID" value="NM_153838.5"/>
    <property type="RefSeq protein sequence ID" value="NP_722580.3"/>
</dbReference>
<dbReference type="UCSC" id="uc003oyz.2">
    <property type="organism name" value="human"/>
</dbReference>
<dbReference type="AGR" id="HGNC:19011"/>
<dbReference type="CTD" id="221393"/>
<dbReference type="DisGeNET" id="221393"/>
<dbReference type="GeneCards" id="ADGRF4"/>
<dbReference type="HGNC" id="HGNC:19011">
    <property type="gene designation" value="ADGRF4"/>
</dbReference>
<dbReference type="HPA" id="ENSG00000153294">
    <property type="expression patterns" value="Tissue enhanced (esophagus, skin)"/>
</dbReference>
<dbReference type="neXtProt" id="NX_Q8IZF3"/>
<dbReference type="OpenTargets" id="ENSG00000153294"/>
<dbReference type="PharmGKB" id="PA134954617"/>
<dbReference type="VEuPathDB" id="HostDB:ENSG00000153294"/>
<dbReference type="eggNOG" id="KOG4193">
    <property type="taxonomic scope" value="Eukaryota"/>
</dbReference>
<dbReference type="GeneTree" id="ENSGT00940000161797"/>
<dbReference type="HOGENOM" id="CLU_002753_3_6_1"/>
<dbReference type="InParanoid" id="Q8IZF3"/>
<dbReference type="OMA" id="CETTLEI"/>
<dbReference type="OrthoDB" id="10040049at2759"/>
<dbReference type="PAN-GO" id="Q8IZF3">
    <property type="GO annotations" value="2 GO annotations based on evolutionary models"/>
</dbReference>
<dbReference type="PhylomeDB" id="Q8IZF3"/>
<dbReference type="TreeFam" id="TF316380"/>
<dbReference type="PathwayCommons" id="Q8IZF3"/>
<dbReference type="SignaLink" id="Q8IZF3"/>
<dbReference type="BioGRID-ORCS" id="221393">
    <property type="hits" value="9 hits in 1142 CRISPR screens"/>
</dbReference>
<dbReference type="ChiTaRS" id="ADGRF4">
    <property type="organism name" value="human"/>
</dbReference>
<dbReference type="GeneWiki" id="GPR115"/>
<dbReference type="GenomeRNAi" id="221393"/>
<dbReference type="Pharos" id="Q8IZF3">
    <property type="development level" value="Tdark"/>
</dbReference>
<dbReference type="PRO" id="PR:Q8IZF3"/>
<dbReference type="Proteomes" id="UP000005640">
    <property type="component" value="Chromosome 6"/>
</dbReference>
<dbReference type="RNAct" id="Q8IZF3">
    <property type="molecule type" value="protein"/>
</dbReference>
<dbReference type="Bgee" id="ENSG00000153294">
    <property type="expression patterns" value="Expressed in skin of abdomen and 92 other cell types or tissues"/>
</dbReference>
<dbReference type="ExpressionAtlas" id="Q8IZF3">
    <property type="expression patterns" value="baseline and differential"/>
</dbReference>
<dbReference type="GO" id="GO:0016020">
    <property type="term" value="C:membrane"/>
    <property type="evidence" value="ECO:0000304"/>
    <property type="project" value="GDB"/>
</dbReference>
<dbReference type="GO" id="GO:0004930">
    <property type="term" value="F:G protein-coupled receptor activity"/>
    <property type="evidence" value="ECO:0000318"/>
    <property type="project" value="GO_Central"/>
</dbReference>
<dbReference type="GO" id="GO:0007189">
    <property type="term" value="P:adenylate cyclase-activating G protein-coupled receptor signaling pathway"/>
    <property type="evidence" value="ECO:0000318"/>
    <property type="project" value="GO_Central"/>
</dbReference>
<dbReference type="GO" id="GO:0007166">
    <property type="term" value="P:cell surface receptor signaling pathway"/>
    <property type="evidence" value="ECO:0007669"/>
    <property type="project" value="InterPro"/>
</dbReference>
<dbReference type="GO" id="GO:0007186">
    <property type="term" value="P:G protein-coupled receptor signaling pathway"/>
    <property type="evidence" value="ECO:0000304"/>
    <property type="project" value="GDB"/>
</dbReference>
<dbReference type="CDD" id="cd15994">
    <property type="entry name" value="7tmB2_GPR111_115"/>
    <property type="match status" value="1"/>
</dbReference>
<dbReference type="FunFam" id="2.60.220.50:FF:000015">
    <property type="entry name" value="Adhesion G protein-coupled receptor F4"/>
    <property type="match status" value="1"/>
</dbReference>
<dbReference type="FunFam" id="1.20.1070.10:FF:000058">
    <property type="entry name" value="Adhesion G protein-coupled receptor F5"/>
    <property type="match status" value="1"/>
</dbReference>
<dbReference type="Gene3D" id="2.60.220.50">
    <property type="match status" value="1"/>
</dbReference>
<dbReference type="Gene3D" id="1.20.1070.10">
    <property type="entry name" value="Rhodopsin 7-helix transmembrane proteins"/>
    <property type="match status" value="1"/>
</dbReference>
<dbReference type="InterPro" id="IPR051587">
    <property type="entry name" value="Adhesion_GPCR"/>
</dbReference>
<dbReference type="InterPro" id="IPR057244">
    <property type="entry name" value="GAIN_B"/>
</dbReference>
<dbReference type="InterPro" id="IPR046338">
    <property type="entry name" value="GAIN_dom_sf"/>
</dbReference>
<dbReference type="InterPro" id="IPR017981">
    <property type="entry name" value="GPCR_2-like_7TM"/>
</dbReference>
<dbReference type="InterPro" id="IPR008078">
    <property type="entry name" value="GPCR_2_Ig-hepta-like_rcpt"/>
</dbReference>
<dbReference type="InterPro" id="IPR000832">
    <property type="entry name" value="GPCR_2_secretin-like"/>
</dbReference>
<dbReference type="InterPro" id="IPR000203">
    <property type="entry name" value="GPS"/>
</dbReference>
<dbReference type="PANTHER" id="PTHR45813:SF1">
    <property type="entry name" value="ADHESION G PROTEIN-COUPLED RECEPTOR F4"/>
    <property type="match status" value="1"/>
</dbReference>
<dbReference type="PANTHER" id="PTHR45813">
    <property type="entry name" value="IG-LIKE DOMAIN-CONTAINING PROTEIN"/>
    <property type="match status" value="1"/>
</dbReference>
<dbReference type="Pfam" id="PF00002">
    <property type="entry name" value="7tm_2"/>
    <property type="match status" value="1"/>
</dbReference>
<dbReference type="Pfam" id="PF01825">
    <property type="entry name" value="GPS"/>
    <property type="match status" value="1"/>
</dbReference>
<dbReference type="PRINTS" id="PR00249">
    <property type="entry name" value="GPCRSECRETIN"/>
</dbReference>
<dbReference type="PRINTS" id="PR01695">
    <property type="entry name" value="IGHEPTARCPTR"/>
</dbReference>
<dbReference type="SUPFAM" id="SSF81321">
    <property type="entry name" value="Family A G protein-coupled receptor-like"/>
    <property type="match status" value="1"/>
</dbReference>
<dbReference type="PROSITE" id="PS50261">
    <property type="entry name" value="G_PROTEIN_RECEP_F2_4"/>
    <property type="match status" value="1"/>
</dbReference>
<dbReference type="PROSITE" id="PS50221">
    <property type="entry name" value="GAIN_B"/>
    <property type="match status" value="1"/>
</dbReference>
<keyword id="KW-1015">Disulfide bond</keyword>
<keyword id="KW-0297">G-protein coupled receptor</keyword>
<keyword id="KW-0325">Glycoprotein</keyword>
<keyword id="KW-0472">Membrane</keyword>
<keyword id="KW-1267">Proteomics identification</keyword>
<keyword id="KW-0675">Receptor</keyword>
<keyword id="KW-1185">Reference proteome</keyword>
<keyword id="KW-0732">Signal</keyword>
<keyword id="KW-0807">Transducer</keyword>
<keyword id="KW-0812">Transmembrane</keyword>
<keyword id="KW-1133">Transmembrane helix</keyword>